<gene>
    <name evidence="1" type="primary">rpoC</name>
    <name type="ordered locus">SPT_1937</name>
</gene>
<reference key="1">
    <citation type="journal article" date="2010" name="Genome Biol.">
        <title>Structure and dynamics of the pan-genome of Streptococcus pneumoniae and closely related species.</title>
        <authorList>
            <person name="Donati C."/>
            <person name="Hiller N.L."/>
            <person name="Tettelin H."/>
            <person name="Muzzi A."/>
            <person name="Croucher N.J."/>
            <person name="Angiuoli S.V."/>
            <person name="Oggioni M."/>
            <person name="Dunning Hotopp J.C."/>
            <person name="Hu F.Z."/>
            <person name="Riley D.R."/>
            <person name="Covacci A."/>
            <person name="Mitchell T.J."/>
            <person name="Bentley S.D."/>
            <person name="Kilian M."/>
            <person name="Ehrlich G.D."/>
            <person name="Rappuoli R."/>
            <person name="Moxon E.R."/>
            <person name="Masignani V."/>
        </authorList>
    </citation>
    <scope>NUCLEOTIDE SEQUENCE [LARGE SCALE GENOMIC DNA]</scope>
    <source>
        <strain>Taiwan19F-14</strain>
    </source>
</reference>
<protein>
    <recommendedName>
        <fullName evidence="1">DNA-directed RNA polymerase subunit beta'</fullName>
        <shortName evidence="1">RNAP subunit beta'</shortName>
        <ecNumber evidence="1">2.7.7.6</ecNumber>
    </recommendedName>
    <alternativeName>
        <fullName evidence="1">RNA polymerase subunit beta'</fullName>
    </alternativeName>
    <alternativeName>
        <fullName evidence="1">Transcriptase subunit beta'</fullName>
    </alternativeName>
</protein>
<evidence type="ECO:0000255" key="1">
    <source>
        <dbReference type="HAMAP-Rule" id="MF_01322"/>
    </source>
</evidence>
<dbReference type="EC" id="2.7.7.6" evidence="1"/>
<dbReference type="EMBL" id="CP000921">
    <property type="protein sequence ID" value="ACO23696.1"/>
    <property type="molecule type" value="Genomic_DNA"/>
</dbReference>
<dbReference type="RefSeq" id="WP_000228766.1">
    <property type="nucleotide sequence ID" value="NC_012469.1"/>
</dbReference>
<dbReference type="SMR" id="C1CTL3"/>
<dbReference type="KEGG" id="snt:SPT_1937"/>
<dbReference type="HOGENOM" id="CLU_000524_3_1_9"/>
<dbReference type="GO" id="GO:0000428">
    <property type="term" value="C:DNA-directed RNA polymerase complex"/>
    <property type="evidence" value="ECO:0007669"/>
    <property type="project" value="UniProtKB-KW"/>
</dbReference>
<dbReference type="GO" id="GO:0003677">
    <property type="term" value="F:DNA binding"/>
    <property type="evidence" value="ECO:0007669"/>
    <property type="project" value="UniProtKB-UniRule"/>
</dbReference>
<dbReference type="GO" id="GO:0003899">
    <property type="term" value="F:DNA-directed RNA polymerase activity"/>
    <property type="evidence" value="ECO:0007669"/>
    <property type="project" value="UniProtKB-UniRule"/>
</dbReference>
<dbReference type="GO" id="GO:0000287">
    <property type="term" value="F:magnesium ion binding"/>
    <property type="evidence" value="ECO:0007669"/>
    <property type="project" value="UniProtKB-UniRule"/>
</dbReference>
<dbReference type="GO" id="GO:0008270">
    <property type="term" value="F:zinc ion binding"/>
    <property type="evidence" value="ECO:0007669"/>
    <property type="project" value="UniProtKB-UniRule"/>
</dbReference>
<dbReference type="GO" id="GO:0006351">
    <property type="term" value="P:DNA-templated transcription"/>
    <property type="evidence" value="ECO:0007669"/>
    <property type="project" value="UniProtKB-UniRule"/>
</dbReference>
<dbReference type="CDD" id="cd02655">
    <property type="entry name" value="RNAP_beta'_C"/>
    <property type="match status" value="1"/>
</dbReference>
<dbReference type="CDD" id="cd01609">
    <property type="entry name" value="RNAP_beta'_N"/>
    <property type="match status" value="1"/>
</dbReference>
<dbReference type="FunFam" id="1.10.150.390:FF:000002">
    <property type="entry name" value="DNA-directed RNA polymerase subunit beta"/>
    <property type="match status" value="1"/>
</dbReference>
<dbReference type="FunFam" id="4.10.860.120:FF:000001">
    <property type="entry name" value="DNA-directed RNA polymerase subunit beta"/>
    <property type="match status" value="1"/>
</dbReference>
<dbReference type="Gene3D" id="1.10.132.30">
    <property type="match status" value="1"/>
</dbReference>
<dbReference type="Gene3D" id="1.10.150.390">
    <property type="match status" value="1"/>
</dbReference>
<dbReference type="Gene3D" id="1.10.1790.20">
    <property type="match status" value="1"/>
</dbReference>
<dbReference type="Gene3D" id="1.10.40.90">
    <property type="match status" value="1"/>
</dbReference>
<dbReference type="Gene3D" id="2.40.40.20">
    <property type="match status" value="1"/>
</dbReference>
<dbReference type="Gene3D" id="2.40.50.100">
    <property type="match status" value="1"/>
</dbReference>
<dbReference type="Gene3D" id="4.10.860.120">
    <property type="entry name" value="RNA polymerase II, clamp domain"/>
    <property type="match status" value="1"/>
</dbReference>
<dbReference type="Gene3D" id="1.10.274.100">
    <property type="entry name" value="RNA polymerase Rpb1, domain 3"/>
    <property type="match status" value="1"/>
</dbReference>
<dbReference type="HAMAP" id="MF_01322">
    <property type="entry name" value="RNApol_bact_RpoC"/>
    <property type="match status" value="1"/>
</dbReference>
<dbReference type="InterPro" id="IPR045867">
    <property type="entry name" value="DNA-dir_RpoC_beta_prime"/>
</dbReference>
<dbReference type="InterPro" id="IPR012754">
    <property type="entry name" value="DNA-dir_RpoC_beta_prime_bact"/>
</dbReference>
<dbReference type="InterPro" id="IPR000722">
    <property type="entry name" value="RNA_pol_asu"/>
</dbReference>
<dbReference type="InterPro" id="IPR006592">
    <property type="entry name" value="RNA_pol_N"/>
</dbReference>
<dbReference type="InterPro" id="IPR007080">
    <property type="entry name" value="RNA_pol_Rpb1_1"/>
</dbReference>
<dbReference type="InterPro" id="IPR007066">
    <property type="entry name" value="RNA_pol_Rpb1_3"/>
</dbReference>
<dbReference type="InterPro" id="IPR042102">
    <property type="entry name" value="RNA_pol_Rpb1_3_sf"/>
</dbReference>
<dbReference type="InterPro" id="IPR007083">
    <property type="entry name" value="RNA_pol_Rpb1_4"/>
</dbReference>
<dbReference type="InterPro" id="IPR007081">
    <property type="entry name" value="RNA_pol_Rpb1_5"/>
</dbReference>
<dbReference type="InterPro" id="IPR044893">
    <property type="entry name" value="RNA_pol_Rpb1_clamp_domain"/>
</dbReference>
<dbReference type="InterPro" id="IPR038120">
    <property type="entry name" value="Rpb1_funnel_sf"/>
</dbReference>
<dbReference type="NCBIfam" id="TIGR02386">
    <property type="entry name" value="rpoC_TIGR"/>
    <property type="match status" value="1"/>
</dbReference>
<dbReference type="PANTHER" id="PTHR19376">
    <property type="entry name" value="DNA-DIRECTED RNA POLYMERASE"/>
    <property type="match status" value="1"/>
</dbReference>
<dbReference type="PANTHER" id="PTHR19376:SF54">
    <property type="entry name" value="DNA-DIRECTED RNA POLYMERASE SUBUNIT BETA"/>
    <property type="match status" value="1"/>
</dbReference>
<dbReference type="Pfam" id="PF04997">
    <property type="entry name" value="RNA_pol_Rpb1_1"/>
    <property type="match status" value="1"/>
</dbReference>
<dbReference type="Pfam" id="PF00623">
    <property type="entry name" value="RNA_pol_Rpb1_2"/>
    <property type="match status" value="2"/>
</dbReference>
<dbReference type="Pfam" id="PF04983">
    <property type="entry name" value="RNA_pol_Rpb1_3"/>
    <property type="match status" value="1"/>
</dbReference>
<dbReference type="Pfam" id="PF05000">
    <property type="entry name" value="RNA_pol_Rpb1_4"/>
    <property type="match status" value="1"/>
</dbReference>
<dbReference type="Pfam" id="PF04998">
    <property type="entry name" value="RNA_pol_Rpb1_5"/>
    <property type="match status" value="1"/>
</dbReference>
<dbReference type="SMART" id="SM00663">
    <property type="entry name" value="RPOLA_N"/>
    <property type="match status" value="1"/>
</dbReference>
<dbReference type="SUPFAM" id="SSF64484">
    <property type="entry name" value="beta and beta-prime subunits of DNA dependent RNA-polymerase"/>
    <property type="match status" value="1"/>
</dbReference>
<organism>
    <name type="scientific">Streptococcus pneumoniae (strain Taiwan19F-14)</name>
    <dbReference type="NCBI Taxonomy" id="487213"/>
    <lineage>
        <taxon>Bacteria</taxon>
        <taxon>Bacillati</taxon>
        <taxon>Bacillota</taxon>
        <taxon>Bacilli</taxon>
        <taxon>Lactobacillales</taxon>
        <taxon>Streptococcaceae</taxon>
        <taxon>Streptococcus</taxon>
    </lineage>
</organism>
<name>RPOC_STRZT</name>
<feature type="chain" id="PRO_1000165855" description="DNA-directed RNA polymerase subunit beta'">
    <location>
        <begin position="1"/>
        <end position="1225"/>
    </location>
</feature>
<feature type="binding site" evidence="1">
    <location>
        <position position="60"/>
    </location>
    <ligand>
        <name>Zn(2+)</name>
        <dbReference type="ChEBI" id="CHEBI:29105"/>
        <label>1</label>
    </ligand>
</feature>
<feature type="binding site" evidence="1">
    <location>
        <position position="62"/>
    </location>
    <ligand>
        <name>Zn(2+)</name>
        <dbReference type="ChEBI" id="CHEBI:29105"/>
        <label>1</label>
    </ligand>
</feature>
<feature type="binding site" evidence="1">
    <location>
        <position position="75"/>
    </location>
    <ligand>
        <name>Zn(2+)</name>
        <dbReference type="ChEBI" id="CHEBI:29105"/>
        <label>1</label>
    </ligand>
</feature>
<feature type="binding site" evidence="1">
    <location>
        <position position="78"/>
    </location>
    <ligand>
        <name>Zn(2+)</name>
        <dbReference type="ChEBI" id="CHEBI:29105"/>
        <label>1</label>
    </ligand>
</feature>
<feature type="binding site" evidence="1">
    <location>
        <position position="450"/>
    </location>
    <ligand>
        <name>Mg(2+)</name>
        <dbReference type="ChEBI" id="CHEBI:18420"/>
    </ligand>
</feature>
<feature type="binding site" evidence="1">
    <location>
        <position position="452"/>
    </location>
    <ligand>
        <name>Mg(2+)</name>
        <dbReference type="ChEBI" id="CHEBI:18420"/>
    </ligand>
</feature>
<feature type="binding site" evidence="1">
    <location>
        <position position="454"/>
    </location>
    <ligand>
        <name>Mg(2+)</name>
        <dbReference type="ChEBI" id="CHEBI:18420"/>
    </ligand>
</feature>
<feature type="binding site" evidence="1">
    <location>
        <position position="818"/>
    </location>
    <ligand>
        <name>Zn(2+)</name>
        <dbReference type="ChEBI" id="CHEBI:29105"/>
        <label>2</label>
    </ligand>
</feature>
<feature type="binding site" evidence="1">
    <location>
        <position position="892"/>
    </location>
    <ligand>
        <name>Zn(2+)</name>
        <dbReference type="ChEBI" id="CHEBI:29105"/>
        <label>2</label>
    </ligand>
</feature>
<feature type="binding site" evidence="1">
    <location>
        <position position="899"/>
    </location>
    <ligand>
        <name>Zn(2+)</name>
        <dbReference type="ChEBI" id="CHEBI:29105"/>
        <label>2</label>
    </ligand>
</feature>
<feature type="binding site" evidence="1">
    <location>
        <position position="902"/>
    </location>
    <ligand>
        <name>Zn(2+)</name>
        <dbReference type="ChEBI" id="CHEBI:29105"/>
        <label>2</label>
    </ligand>
</feature>
<proteinExistence type="inferred from homology"/>
<sequence>MVDVNRFKSMQITLASPSKVRSWSYGEVKKPETINYRTLKPEREGLFDEVIFGPTKDWECACGKYKRIRYRGIVCDRCGVEVTRTKVRRERMGHIELKAPVSHIWYFKGIPSRMGLTLDMSPRALEEVIYFAAYVVIDPKDTPLEHKSIMTEREYRERLREYGYGSFVAKMGAEAIQDLLKQVDLEKEIAELKEELKTATGQKRVKAIRRLDVLDAFYKSGNKPEWMILNILPVIPPDLRPMLQLDGGRFASSDLNDLYRRVINRNNRLARLLELNAPGIIVQNEKRMLQEAVDALIDNGRRGRPITGPGSRPLKSLSHMLKGKQGRFRQNLLGKRVDFSGRSVIAVGPTLKMYQCGVPREMAIELFKPFVMREIVARDIVQNVKAAKRLVERGDERIWDILEEVIKEHPVLLNRAPTLHRLGIQAFEPVLIDGKALRLHPLVCEAYNADFDGDQMAIHVPLSEEAQAEARILMLAAEHILNPKDGKPVVTPSQDMVLGNYYLTMEEAGREGEGMVFKDRDEAVMAYRNGYVHLHSRVGIATDSLNKPWTEEQRHKVLLTTVGKILFNDIMPEGLPYLQEPNNANLTEGVPAKYFLPLGGDIKEAISNLELNPPFKKKNLGNIIAEIFKRFRTTETSALLDRMKNLGYHHSTLAGLTVGIADIPVVDDKAEIIEESHKRVEQITKQFRRGMITDDERYNAVTAEWRAAREKLEKRLIANQDPKNPIVMMMDSGARGNISNFSQLAGMRGLMAAPNGRIMELPILSNFREGLSVLEMFFSTHGARKGMTDTALKTADSGYLTRRLVDVAQDVIIREDDCGTDRGLLIRSIAEGKEMIESLEERLNGRYTKKTVKHPETGAVIIGPNELITEDKAREIVNAGVEEVTIRSVFTCNTRHGVCRHCYGINLATGDAVEVGEAVGTIAAQSIGEPGTQLTMRTFHTGGVASNTDITQGLPRVQEIFEARNPKGEAVITEVKGQVTAIEEDASTRTKKVFVKGETGEGEYVVPFTARMRVEVGGQVARGAALTEGSIQPKRLLAVRDVLSVETYLLGEVQKVYRSQGVEIGDKHIEVMVRQMIRKVRVMDPGDTDLLMGTLMDINDFTDANKDVLIAGGVPATGRPVLMGITKASLETNSFLSAASFQETTRVLTDAAIRGKKDHLLGLKENVIIGKIIPAGTGMARYRNLEPHAVNEEEYLNPPVEEEGNEETTEVVVDTAVETVEETVE</sequence>
<accession>C1CTL3</accession>
<comment type="function">
    <text evidence="1">DNA-dependent RNA polymerase catalyzes the transcription of DNA into RNA using the four ribonucleoside triphosphates as substrates.</text>
</comment>
<comment type="catalytic activity">
    <reaction evidence="1">
        <text>RNA(n) + a ribonucleoside 5'-triphosphate = RNA(n+1) + diphosphate</text>
        <dbReference type="Rhea" id="RHEA:21248"/>
        <dbReference type="Rhea" id="RHEA-COMP:14527"/>
        <dbReference type="Rhea" id="RHEA-COMP:17342"/>
        <dbReference type="ChEBI" id="CHEBI:33019"/>
        <dbReference type="ChEBI" id="CHEBI:61557"/>
        <dbReference type="ChEBI" id="CHEBI:140395"/>
        <dbReference type="EC" id="2.7.7.6"/>
    </reaction>
</comment>
<comment type="cofactor">
    <cofactor evidence="1">
        <name>Mg(2+)</name>
        <dbReference type="ChEBI" id="CHEBI:18420"/>
    </cofactor>
    <text evidence="1">Binds 1 Mg(2+) ion per subunit.</text>
</comment>
<comment type="cofactor">
    <cofactor evidence="1">
        <name>Zn(2+)</name>
        <dbReference type="ChEBI" id="CHEBI:29105"/>
    </cofactor>
    <text evidence="1">Binds 2 Zn(2+) ions per subunit.</text>
</comment>
<comment type="subunit">
    <text evidence="1">The RNAP catalytic core consists of 2 alpha, 1 beta, 1 beta' and 1 omega subunit. When a sigma factor is associated with the core the holoenzyme is formed, which can initiate transcription.</text>
</comment>
<comment type="similarity">
    <text evidence="1">Belongs to the RNA polymerase beta' chain family.</text>
</comment>
<keyword id="KW-0240">DNA-directed RNA polymerase</keyword>
<keyword id="KW-0460">Magnesium</keyword>
<keyword id="KW-0479">Metal-binding</keyword>
<keyword id="KW-0548">Nucleotidyltransferase</keyword>
<keyword id="KW-0804">Transcription</keyword>
<keyword id="KW-0808">Transferase</keyword>
<keyword id="KW-0862">Zinc</keyword>